<gene>
    <name evidence="1" type="primary">glpG</name>
    <name type="ordered locus">EcSMS35_3704</name>
</gene>
<proteinExistence type="inferred from homology"/>
<dbReference type="EC" id="3.4.21.105" evidence="1"/>
<dbReference type="EMBL" id="CP000970">
    <property type="protein sequence ID" value="ACB19594.1"/>
    <property type="molecule type" value="Genomic_DNA"/>
</dbReference>
<dbReference type="RefSeq" id="WP_000928723.1">
    <property type="nucleotide sequence ID" value="NC_010498.1"/>
</dbReference>
<dbReference type="SMR" id="B1LI84"/>
<dbReference type="MEROPS" id="S54.016"/>
<dbReference type="GeneID" id="86862178"/>
<dbReference type="KEGG" id="ecm:EcSMS35_3704"/>
<dbReference type="HOGENOM" id="CLU_058989_0_0_6"/>
<dbReference type="Proteomes" id="UP000007011">
    <property type="component" value="Chromosome"/>
</dbReference>
<dbReference type="GO" id="GO:0005886">
    <property type="term" value="C:plasma membrane"/>
    <property type="evidence" value="ECO:0007669"/>
    <property type="project" value="UniProtKB-SubCell"/>
</dbReference>
<dbReference type="GO" id="GO:0004252">
    <property type="term" value="F:serine-type endopeptidase activity"/>
    <property type="evidence" value="ECO:0007669"/>
    <property type="project" value="UniProtKB-UniRule"/>
</dbReference>
<dbReference type="GO" id="GO:0006508">
    <property type="term" value="P:proteolysis"/>
    <property type="evidence" value="ECO:0007669"/>
    <property type="project" value="UniProtKB-UniRule"/>
</dbReference>
<dbReference type="FunFam" id="1.20.1540.10:FF:000003">
    <property type="entry name" value="Rhomboid protease GlpG"/>
    <property type="match status" value="1"/>
</dbReference>
<dbReference type="FunFam" id="3.30.70.2350:FF:000001">
    <property type="entry name" value="Rhomboid protease GlpG"/>
    <property type="match status" value="1"/>
</dbReference>
<dbReference type="Gene3D" id="3.30.70.2350">
    <property type="match status" value="1"/>
</dbReference>
<dbReference type="Gene3D" id="1.20.1540.10">
    <property type="entry name" value="Rhomboid-like"/>
    <property type="match status" value="1"/>
</dbReference>
<dbReference type="HAMAP" id="MF_01594">
    <property type="entry name" value="Rhomboid_GlpG"/>
    <property type="match status" value="1"/>
</dbReference>
<dbReference type="InterPro" id="IPR038236">
    <property type="entry name" value="GlpG_N_sf"/>
</dbReference>
<dbReference type="InterPro" id="IPR022732">
    <property type="entry name" value="Peptidase_S54_GlpG_N"/>
</dbReference>
<dbReference type="InterPro" id="IPR022764">
    <property type="entry name" value="Peptidase_S54_rhomboid_dom"/>
</dbReference>
<dbReference type="InterPro" id="IPR035952">
    <property type="entry name" value="Rhomboid-like_sf"/>
</dbReference>
<dbReference type="InterPro" id="IPR023662">
    <property type="entry name" value="Rhomboid_protease_GlpG"/>
</dbReference>
<dbReference type="NCBIfam" id="NF008155">
    <property type="entry name" value="PRK10907.1"/>
    <property type="match status" value="1"/>
</dbReference>
<dbReference type="NCBIfam" id="TIGR04239">
    <property type="entry name" value="rhombo_GlpG"/>
    <property type="match status" value="1"/>
</dbReference>
<dbReference type="PANTHER" id="PTHR43066:SF26">
    <property type="entry name" value="RHOMBOID PROTEASE GLPG"/>
    <property type="match status" value="1"/>
</dbReference>
<dbReference type="PANTHER" id="PTHR43066">
    <property type="entry name" value="RHOMBOID-RELATED PROTEIN"/>
    <property type="match status" value="1"/>
</dbReference>
<dbReference type="Pfam" id="PF01694">
    <property type="entry name" value="Rhomboid"/>
    <property type="match status" value="1"/>
</dbReference>
<dbReference type="Pfam" id="PF12122">
    <property type="entry name" value="Rhomboid_N"/>
    <property type="match status" value="1"/>
</dbReference>
<dbReference type="SUPFAM" id="SSF144091">
    <property type="entry name" value="Rhomboid-like"/>
    <property type="match status" value="1"/>
</dbReference>
<name>GLPG_ECOSM</name>
<evidence type="ECO:0000255" key="1">
    <source>
        <dbReference type="HAMAP-Rule" id="MF_01594"/>
    </source>
</evidence>
<feature type="chain" id="PRO_1000147859" description="Rhomboid protease GlpG">
    <location>
        <begin position="1"/>
        <end position="276"/>
    </location>
</feature>
<feature type="transmembrane region" description="Helical" evidence="1">
    <location>
        <begin position="94"/>
        <end position="114"/>
    </location>
</feature>
<feature type="transmembrane region" description="Helical" evidence="1">
    <location>
        <begin position="142"/>
        <end position="162"/>
    </location>
</feature>
<feature type="transmembrane region" description="Helical" evidence="1">
    <location>
        <begin position="169"/>
        <end position="189"/>
    </location>
</feature>
<feature type="transmembrane region" description="Helical" evidence="1">
    <location>
        <begin position="192"/>
        <end position="212"/>
    </location>
</feature>
<feature type="transmembrane region" description="Helical" evidence="1">
    <location>
        <begin position="229"/>
        <end position="249"/>
    </location>
</feature>
<feature type="transmembrane region" description="Helical" evidence="1">
    <location>
        <begin position="250"/>
        <end position="270"/>
    </location>
</feature>
<feature type="active site" description="Nucleophile" evidence="1">
    <location>
        <position position="201"/>
    </location>
</feature>
<feature type="active site" evidence="1">
    <location>
        <position position="254"/>
    </location>
</feature>
<accession>B1LI84</accession>
<organism>
    <name type="scientific">Escherichia coli (strain SMS-3-5 / SECEC)</name>
    <dbReference type="NCBI Taxonomy" id="439855"/>
    <lineage>
        <taxon>Bacteria</taxon>
        <taxon>Pseudomonadati</taxon>
        <taxon>Pseudomonadota</taxon>
        <taxon>Gammaproteobacteria</taxon>
        <taxon>Enterobacterales</taxon>
        <taxon>Enterobacteriaceae</taxon>
        <taxon>Escherichia</taxon>
    </lineage>
</organism>
<sequence>MLMITSFANPRVAQAFVDYMATQGVILTIQQHNQSDVWLADESQAERVRAELARFLENPADPRYLAASWQAGHTGSGLHYRRYPFFAALRERAGPVTWVMMIACVVVFIAMQILGDQEVMLWLAWPFDPTLKFEFWRYFTHALMHFSLMHILFNLLWWWYLGGAVEKRLGSGKLIVITLISALLSGYVQQKFSGPWFGGLSGVVYALMGYVWLRGERDPQSGIYLQRGLIIFALIWIVAGWFDLFGMSMANGAHIAGLAVGLAMAFVDSLNARKRK</sequence>
<comment type="function">
    <text evidence="1">Rhomboid-type serine protease that catalyzes intramembrane proteolysis.</text>
</comment>
<comment type="catalytic activity">
    <reaction evidence="1">
        <text>Cleaves type-1 transmembrane domains using a catalytic dyad composed of serine and histidine that are contributed by different transmembrane domains.</text>
        <dbReference type="EC" id="3.4.21.105"/>
    </reaction>
</comment>
<comment type="subcellular location">
    <subcellularLocation>
        <location evidence="1">Cell inner membrane</location>
        <topology evidence="1">Multi-pass membrane protein</topology>
    </subcellularLocation>
</comment>
<comment type="similarity">
    <text evidence="1">Belongs to the peptidase S54 family.</text>
</comment>
<protein>
    <recommendedName>
        <fullName evidence="1">Rhomboid protease GlpG</fullName>
        <ecNumber evidence="1">3.4.21.105</ecNumber>
    </recommendedName>
    <alternativeName>
        <fullName evidence="1">Intramembrane serine protease</fullName>
    </alternativeName>
</protein>
<keyword id="KW-0997">Cell inner membrane</keyword>
<keyword id="KW-1003">Cell membrane</keyword>
<keyword id="KW-0378">Hydrolase</keyword>
<keyword id="KW-0472">Membrane</keyword>
<keyword id="KW-0645">Protease</keyword>
<keyword id="KW-0720">Serine protease</keyword>
<keyword id="KW-0812">Transmembrane</keyword>
<keyword id="KW-1133">Transmembrane helix</keyword>
<reference key="1">
    <citation type="journal article" date="2008" name="J. Bacteriol.">
        <title>Insights into the environmental resistance gene pool from the genome sequence of the multidrug-resistant environmental isolate Escherichia coli SMS-3-5.</title>
        <authorList>
            <person name="Fricke W.F."/>
            <person name="Wright M.S."/>
            <person name="Lindell A.H."/>
            <person name="Harkins D.M."/>
            <person name="Baker-Austin C."/>
            <person name="Ravel J."/>
            <person name="Stepanauskas R."/>
        </authorList>
    </citation>
    <scope>NUCLEOTIDE SEQUENCE [LARGE SCALE GENOMIC DNA]</scope>
    <source>
        <strain>SMS-3-5 / SECEC</strain>
    </source>
</reference>